<comment type="function">
    <text>Electron carrier protein. The oxidized form of the cytochrome c heme group can accept an electron from the heme group of the cytochrome c1 subunit of cytochrome reductase. Cytochrome c then transfers this electron to the cytochrome oxidase complex, the final protein carrier in the mitochondrial electron-transport chain.</text>
</comment>
<comment type="subcellular location">
    <subcellularLocation>
        <location>Mitochondrion intermembrane space</location>
    </subcellularLocation>
    <text>Loosely associated with the inner membrane.</text>
</comment>
<comment type="PTM">
    <text>Binds 1 heme c group covalently per subunit.</text>
</comment>
<comment type="similarity">
    <text evidence="2">Belongs to the cytochrome c family.</text>
</comment>
<comment type="online information" name="Protein Spotlight">
    <link uri="https://www.proteinspotlight.org/back_issues/076"/>
    <text>Life shuttle - Issue 76 of November 2006</text>
</comment>
<sequence>ASFDEAPPGNSKAGEKIFKTKCAQCHTVDKGAGHKQGPNLNGLFGRQSGTTAGYSYSAANKNKAVEWEEKTLYDYLLNPKKYIPGTKMVFPGLKKPQDRADLIAYLKEATA</sequence>
<protein>
    <recommendedName>
        <fullName>Cytochrome c</fullName>
    </recommendedName>
</protein>
<accession>P62772</accession>
<accession>P00050</accession>
<name>CYC_BRANA</name>
<dbReference type="PIR" id="A00043">
    <property type="entry name" value="CCRPBN"/>
</dbReference>
<dbReference type="SMR" id="P62772"/>
<dbReference type="iPTMnet" id="P62772"/>
<dbReference type="GO" id="GO:0005758">
    <property type="term" value="C:mitochondrial intermembrane space"/>
    <property type="evidence" value="ECO:0007669"/>
    <property type="project" value="UniProtKB-SubCell"/>
</dbReference>
<dbReference type="GO" id="GO:0009055">
    <property type="term" value="F:electron transfer activity"/>
    <property type="evidence" value="ECO:0007669"/>
    <property type="project" value="InterPro"/>
</dbReference>
<dbReference type="GO" id="GO:0020037">
    <property type="term" value="F:heme binding"/>
    <property type="evidence" value="ECO:0007669"/>
    <property type="project" value="InterPro"/>
</dbReference>
<dbReference type="GO" id="GO:0046872">
    <property type="term" value="F:metal ion binding"/>
    <property type="evidence" value="ECO:0007669"/>
    <property type="project" value="UniProtKB-KW"/>
</dbReference>
<dbReference type="FunFam" id="1.10.760.10:FF:000001">
    <property type="entry name" value="Cytochrome c iso-1"/>
    <property type="match status" value="1"/>
</dbReference>
<dbReference type="Gene3D" id="1.10.760.10">
    <property type="entry name" value="Cytochrome c-like domain"/>
    <property type="match status" value="1"/>
</dbReference>
<dbReference type="InterPro" id="IPR009056">
    <property type="entry name" value="Cyt_c-like_dom"/>
</dbReference>
<dbReference type="InterPro" id="IPR036909">
    <property type="entry name" value="Cyt_c-like_dom_sf"/>
</dbReference>
<dbReference type="InterPro" id="IPR002327">
    <property type="entry name" value="Cyt_c_1A/1B"/>
</dbReference>
<dbReference type="PANTHER" id="PTHR11961">
    <property type="entry name" value="CYTOCHROME C"/>
    <property type="match status" value="1"/>
</dbReference>
<dbReference type="Pfam" id="PF00034">
    <property type="entry name" value="Cytochrom_C"/>
    <property type="match status" value="1"/>
</dbReference>
<dbReference type="PRINTS" id="PR00604">
    <property type="entry name" value="CYTCHRMECIAB"/>
</dbReference>
<dbReference type="SUPFAM" id="SSF46626">
    <property type="entry name" value="Cytochrome c"/>
    <property type="match status" value="1"/>
</dbReference>
<dbReference type="PROSITE" id="PS51007">
    <property type="entry name" value="CYTC"/>
    <property type="match status" value="1"/>
</dbReference>
<evidence type="ECO:0000269" key="1">
    <source>
    </source>
</evidence>
<evidence type="ECO:0000305" key="2"/>
<keyword id="KW-0007">Acetylation</keyword>
<keyword id="KW-0903">Direct protein sequencing</keyword>
<keyword id="KW-0249">Electron transport</keyword>
<keyword id="KW-0349">Heme</keyword>
<keyword id="KW-0408">Iron</keyword>
<keyword id="KW-0479">Metal-binding</keyword>
<keyword id="KW-0488">Methylation</keyword>
<keyword id="KW-0496">Mitochondrion</keyword>
<keyword id="KW-0679">Respiratory chain</keyword>
<keyword id="KW-0813">Transport</keyword>
<feature type="chain" id="PRO_0000108288" description="Cytochrome c">
    <location>
        <begin position="1"/>
        <end position="111"/>
    </location>
</feature>
<feature type="binding site" description="covalent">
    <location>
        <position position="22"/>
    </location>
    <ligand>
        <name>heme c</name>
        <dbReference type="ChEBI" id="CHEBI:61717"/>
    </ligand>
</feature>
<feature type="binding site" description="covalent">
    <location>
        <position position="25"/>
    </location>
    <ligand>
        <name>heme c</name>
        <dbReference type="ChEBI" id="CHEBI:61717"/>
    </ligand>
</feature>
<feature type="binding site" description="axial binding residue">
    <location>
        <position position="26"/>
    </location>
    <ligand>
        <name>heme c</name>
        <dbReference type="ChEBI" id="CHEBI:61717"/>
    </ligand>
    <ligandPart>
        <name>Fe</name>
        <dbReference type="ChEBI" id="CHEBI:18248"/>
    </ligandPart>
</feature>
<feature type="binding site" description="axial binding residue">
    <location>
        <position position="88"/>
    </location>
    <ligand>
        <name>heme c</name>
        <dbReference type="ChEBI" id="CHEBI:61717"/>
    </ligand>
    <ligandPart>
        <name>Fe</name>
        <dbReference type="ChEBI" id="CHEBI:18248"/>
    </ligandPart>
</feature>
<feature type="modified residue" description="N-acetylalanine" evidence="1">
    <location>
        <position position="1"/>
    </location>
</feature>
<feature type="modified residue" description="N6,N6,N6-trimethyllysine" evidence="1">
    <location>
        <position position="80"/>
    </location>
</feature>
<feature type="modified residue" description="N6,N6,N6-trimethyllysine" evidence="1">
    <location>
        <position position="94"/>
    </location>
</feature>
<feature type="sequence variant" description="In 40% of the molecules." evidence="1">
    <original>A</original>
    <variation>S</variation>
    <location>
        <position position="109"/>
    </location>
</feature>
<organism>
    <name type="scientific">Brassica napus</name>
    <name type="common">Rape</name>
    <dbReference type="NCBI Taxonomy" id="3708"/>
    <lineage>
        <taxon>Eukaryota</taxon>
        <taxon>Viridiplantae</taxon>
        <taxon>Streptophyta</taxon>
        <taxon>Embryophyta</taxon>
        <taxon>Tracheophyta</taxon>
        <taxon>Spermatophyta</taxon>
        <taxon>Magnoliopsida</taxon>
        <taxon>eudicotyledons</taxon>
        <taxon>Gunneridae</taxon>
        <taxon>Pentapetalae</taxon>
        <taxon>rosids</taxon>
        <taxon>malvids</taxon>
        <taxon>Brassicales</taxon>
        <taxon>Brassicaceae</taxon>
        <taxon>Brassiceae</taxon>
        <taxon>Brassica</taxon>
    </lineage>
</organism>
<proteinExistence type="evidence at protein level"/>
<reference key="1">
    <citation type="journal article" date="1971" name="Biochim. Biophys. Acta">
        <title>The amino acid sequence of rape (Brassica napus L.) cytochrome c.</title>
        <authorList>
            <person name="Richardson M."/>
            <person name="Ramshaw J.A.M."/>
            <person name="Boulter D."/>
        </authorList>
    </citation>
    <scope>PROTEIN SEQUENCE</scope>
    <scope>VARIANT SER-109</scope>
    <scope>ACETYLATION AT ALA-1</scope>
    <scope>METHYLATION AT LYS-80 AND LYS-94</scope>
</reference>